<organism>
    <name type="scientific">Nicotiana tabacum</name>
    <name type="common">Common tobacco</name>
    <dbReference type="NCBI Taxonomy" id="4097"/>
    <lineage>
        <taxon>Eukaryota</taxon>
        <taxon>Viridiplantae</taxon>
        <taxon>Streptophyta</taxon>
        <taxon>Embryophyta</taxon>
        <taxon>Tracheophyta</taxon>
        <taxon>Spermatophyta</taxon>
        <taxon>Magnoliopsida</taxon>
        <taxon>eudicotyledons</taxon>
        <taxon>Gunneridae</taxon>
        <taxon>Pentapetalae</taxon>
        <taxon>asterids</taxon>
        <taxon>lamiids</taxon>
        <taxon>Solanales</taxon>
        <taxon>Solanaceae</taxon>
        <taxon>Nicotianoideae</taxon>
        <taxon>Nicotianeae</taxon>
        <taxon>Nicotiana</taxon>
    </lineage>
</organism>
<evidence type="ECO:0000255" key="1"/>
<evidence type="ECO:0000269" key="2">
    <source>
    </source>
</evidence>
<evidence type="ECO:0000303" key="3">
    <source>
    </source>
</evidence>
<evidence type="ECO:0000305" key="4"/>
<evidence type="ECO:0000305" key="5">
    <source>
    </source>
</evidence>
<feature type="transit peptide" description="Chloroplast" evidence="1">
    <location>
        <begin position="1"/>
        <end position="71"/>
    </location>
</feature>
<feature type="chain" id="PRO_0000433222" description="Ycf3-interacting protein 1, chloroplastic" evidence="1">
    <location>
        <begin position="72"/>
        <end position="263"/>
    </location>
</feature>
<feature type="transmembrane region" description="Helical" evidence="1">
    <location>
        <begin position="238"/>
        <end position="258"/>
    </location>
</feature>
<feature type="sequence conflict" description="In Ref. 1; ADP76804." evidence="4" ref="1">
    <original>D</original>
    <variation>N</variation>
    <location>
        <position position="201"/>
    </location>
</feature>
<name>Y3IP1_TOBAC</name>
<proteinExistence type="evidence at protein level"/>
<sequence length="263" mass="29579">MASNMLQLSLPPLSSSSSSLPFLSSSVYVLPFTHQRRHFSFFNVQNYRFRLSRSTSLGPLFVNKEEDSATYAVTEEEEDNDDDDPDPQSLEYVSQIKRVLELLKRNRDMLFGEVKLTIMIEDPRDVERRRLLGIDDENAPTRDDLAAALEEINEGKVPKDFAALQMLAEEMNSWPNLEVEATKQNKPGRSLYAKATDTGIDPKEAAKRLKIDWDSAAEIDESAESDEPDVPPALGYGALYLVSAFPIIIGISVVLILFYNSLQ</sequence>
<reference key="1">
    <citation type="journal article" date="2010" name="Plant Cell">
        <title>Y3IP1, a nucleus-encoded thylakoid protein, cooperates with the plastid-encoded Ycf3 protein in photosystem I assembly of tobacco and Arabidopsis.</title>
        <authorList>
            <person name="Albus C.A."/>
            <person name="Ruf S."/>
            <person name="Schottler M.A."/>
            <person name="Lein W."/>
            <person name="Kehr J."/>
            <person name="Bock R."/>
        </authorList>
    </citation>
    <scope>NUCLEOTIDE SEQUENCE [MRNA] OF 172-263</scope>
    <scope>IDENTIFICATION BY MASS SPECTROMETRY</scope>
    <scope>FUNCTION</scope>
    <scope>INTERACTION WITH YCF3</scope>
    <scope>SUBCELLULAR LOCATION</scope>
</reference>
<keyword id="KW-0143">Chaperone</keyword>
<keyword id="KW-0150">Chloroplast</keyword>
<keyword id="KW-0472">Membrane</keyword>
<keyword id="KW-0934">Plastid</keyword>
<keyword id="KW-1185">Reference proteome</keyword>
<keyword id="KW-0793">Thylakoid</keyword>
<keyword id="KW-0809">Transit peptide</keyword>
<keyword id="KW-0812">Transmembrane</keyword>
<keyword id="KW-1133">Transmembrane helix</keyword>
<protein>
    <recommendedName>
        <fullName evidence="3">Ycf3-interacting protein 1, chloroplastic</fullName>
    </recommendedName>
</protein>
<accession>E5KCJ8</accession>
<accession>E5KCJ9</accession>
<dbReference type="EMBL" id="HQ015439">
    <property type="protein sequence ID" value="ADP76804.1"/>
    <property type="molecule type" value="mRNA"/>
</dbReference>
<dbReference type="EMBL" id="HQ015440">
    <property type="protein sequence ID" value="ADP76805.1"/>
    <property type="molecule type" value="mRNA"/>
</dbReference>
<dbReference type="RefSeq" id="XP_016499313.1">
    <property type="nucleotide sequence ID" value="XM_016643827.1"/>
</dbReference>
<dbReference type="SMR" id="E5KCJ8"/>
<dbReference type="STRING" id="4097.E5KCJ8"/>
<dbReference type="PaxDb" id="4097-E5KCJ8"/>
<dbReference type="GeneID" id="107817932"/>
<dbReference type="KEGG" id="nta:107817932"/>
<dbReference type="OMA" id="LYVKREM"/>
<dbReference type="OrthoDB" id="2018626at2759"/>
<dbReference type="Proteomes" id="UP000084051">
    <property type="component" value="Unplaced"/>
</dbReference>
<dbReference type="GO" id="GO:0009535">
    <property type="term" value="C:chloroplast thylakoid membrane"/>
    <property type="evidence" value="ECO:0000314"/>
    <property type="project" value="UniProtKB"/>
</dbReference>
<dbReference type="GO" id="GO:0048564">
    <property type="term" value="P:photosystem I assembly"/>
    <property type="evidence" value="ECO:0000315"/>
    <property type="project" value="UniProtKB"/>
</dbReference>
<dbReference type="GO" id="GO:0080183">
    <property type="term" value="P:response to photooxidative stress"/>
    <property type="evidence" value="ECO:0007669"/>
    <property type="project" value="InterPro"/>
</dbReference>
<dbReference type="InterPro" id="IPR040340">
    <property type="entry name" value="CEST/Y3IP1"/>
</dbReference>
<dbReference type="PANTHER" id="PTHR33672">
    <property type="entry name" value="YCF3-INTERACTING PROTEIN 1, CHLOROPLASTIC"/>
    <property type="match status" value="1"/>
</dbReference>
<dbReference type="PANTHER" id="PTHR33672:SF3">
    <property type="entry name" value="YCF3-INTERACTING PROTEIN 1, CHLOROPLASTIC"/>
    <property type="match status" value="1"/>
</dbReference>
<comment type="function">
    <text evidence="2">Nuclear genome-encoded factor that participates in photosystem I (PSI) biogenesis. Cooperates with the plastid genome-encoded protein PSI assembly Ycf3 in the assembly of stable PSI units in the thylakoid membrane.</text>
</comment>
<comment type="subunit">
    <text evidence="2">Interacts with Ycf3.</text>
</comment>
<comment type="subcellular location">
    <subcellularLocation>
        <location evidence="5">Plastid</location>
        <location evidence="5">Chloroplast thylakoid membrane</location>
        <topology evidence="1">Single-pass membrane protein</topology>
    </subcellularLocation>
</comment>
<comment type="miscellaneous">
    <text evidence="2">Plants silencing Y3IP1 can grow only on sterile sucrose-containing medium and show a light-green phenotype, very slow growth and delayed development.</text>
</comment>
<comment type="similarity">
    <text evidence="4">Belongs to the Y3IP1/CEST family.</text>
</comment>